<sequence length="87" mass="9805">MKTKLNELLEFPCSFTYKVMGIAEPQLVDQVVEVVQRHAPGEYTPQVKPSSKGNYHSVSITITATHIDQVETLYEELGNLELVKMVL</sequence>
<gene>
    <name type="ordered locus">YpsIP31758_2953</name>
</gene>
<evidence type="ECO:0000255" key="1">
    <source>
        <dbReference type="HAMAP-Rule" id="MF_00659"/>
    </source>
</evidence>
<dbReference type="EMBL" id="CP000720">
    <property type="protein sequence ID" value="ABS47542.1"/>
    <property type="molecule type" value="Genomic_DNA"/>
</dbReference>
<dbReference type="SMR" id="A7FKY7"/>
<dbReference type="KEGG" id="ypi:YpsIP31758_2953"/>
<dbReference type="HOGENOM" id="CLU_161438_2_1_6"/>
<dbReference type="Proteomes" id="UP000002412">
    <property type="component" value="Chromosome"/>
</dbReference>
<dbReference type="GO" id="GO:0005829">
    <property type="term" value="C:cytosol"/>
    <property type="evidence" value="ECO:0007669"/>
    <property type="project" value="TreeGrafter"/>
</dbReference>
<dbReference type="FunFam" id="3.30.70.260:FF:000002">
    <property type="entry name" value="UPF0250 protein YbeD"/>
    <property type="match status" value="1"/>
</dbReference>
<dbReference type="Gene3D" id="3.30.70.260">
    <property type="match status" value="1"/>
</dbReference>
<dbReference type="HAMAP" id="MF_00659">
    <property type="entry name" value="UPF0250"/>
    <property type="match status" value="1"/>
</dbReference>
<dbReference type="InterPro" id="IPR007454">
    <property type="entry name" value="UPF0250_YbeD-like"/>
</dbReference>
<dbReference type="InterPro" id="IPR027471">
    <property type="entry name" value="YbeD-like_sf"/>
</dbReference>
<dbReference type="NCBIfam" id="NF003447">
    <property type="entry name" value="PRK04998.1"/>
    <property type="match status" value="1"/>
</dbReference>
<dbReference type="PANTHER" id="PTHR38036">
    <property type="entry name" value="UPF0250 PROTEIN YBED"/>
    <property type="match status" value="1"/>
</dbReference>
<dbReference type="PANTHER" id="PTHR38036:SF1">
    <property type="entry name" value="UPF0250 PROTEIN YBED"/>
    <property type="match status" value="1"/>
</dbReference>
<dbReference type="Pfam" id="PF04359">
    <property type="entry name" value="DUF493"/>
    <property type="match status" value="1"/>
</dbReference>
<dbReference type="SUPFAM" id="SSF117991">
    <property type="entry name" value="YbeD/HP0495-like"/>
    <property type="match status" value="1"/>
</dbReference>
<name>Y2953_YERP3</name>
<organism>
    <name type="scientific">Yersinia pseudotuberculosis serotype O:1b (strain IP 31758)</name>
    <dbReference type="NCBI Taxonomy" id="349747"/>
    <lineage>
        <taxon>Bacteria</taxon>
        <taxon>Pseudomonadati</taxon>
        <taxon>Pseudomonadota</taxon>
        <taxon>Gammaproteobacteria</taxon>
        <taxon>Enterobacterales</taxon>
        <taxon>Yersiniaceae</taxon>
        <taxon>Yersinia</taxon>
    </lineage>
</organism>
<reference key="1">
    <citation type="journal article" date="2007" name="PLoS Genet.">
        <title>The complete genome sequence of Yersinia pseudotuberculosis IP31758, the causative agent of Far East scarlet-like fever.</title>
        <authorList>
            <person name="Eppinger M."/>
            <person name="Rosovitz M.J."/>
            <person name="Fricke W.F."/>
            <person name="Rasko D.A."/>
            <person name="Kokorina G."/>
            <person name="Fayolle C."/>
            <person name="Lindler L.E."/>
            <person name="Carniel E."/>
            <person name="Ravel J."/>
        </authorList>
    </citation>
    <scope>NUCLEOTIDE SEQUENCE [LARGE SCALE GENOMIC DNA]</scope>
    <source>
        <strain>IP 31758</strain>
    </source>
</reference>
<accession>A7FKY7</accession>
<comment type="similarity">
    <text evidence="1">Belongs to the UPF0250 family.</text>
</comment>
<proteinExistence type="inferred from homology"/>
<protein>
    <recommendedName>
        <fullName evidence="1">UPF0250 protein YpsIP31758_2953</fullName>
    </recommendedName>
</protein>
<feature type="chain" id="PRO_1000061910" description="UPF0250 protein YpsIP31758_2953">
    <location>
        <begin position="1"/>
        <end position="87"/>
    </location>
</feature>